<reference key="1">
    <citation type="journal article" date="2012" name="PLoS ONE">
        <title>Characterization of profilin polymorphism in pollen with a focus on multifunctionality.</title>
        <authorList>
            <person name="Jimenez-Lopez J.C."/>
            <person name="Morales S."/>
            <person name="Castro A.J."/>
            <person name="Volkmann D."/>
            <person name="Rodriguez-Garcia M.I."/>
            <person name="Alche Jde D."/>
        </authorList>
    </citation>
    <scope>NUCLEOTIDE SEQUENCE [MRNA]</scope>
    <scope>POLYMORPHISM</scope>
    <source>
        <strain>cv. Pratense</strain>
    </source>
</reference>
<reference key="2">
    <citation type="journal article" date="2013" name="PLoS ONE">
        <title>Analysis of the effects of polymorphism on pollen profilin structural functionality and the generation of conformational, T- and B-cell epitopes.</title>
        <authorList>
            <person name="Jimenez-Lopez J.C."/>
            <person name="Rodriguez-Garcia M.I."/>
            <person name="Alche J.D."/>
        </authorList>
    </citation>
    <scope>3D-STRUCTURE MODELING</scope>
    <scope>DISULFIDE BOND</scope>
</reference>
<feature type="initiator methionine" description="Removed" evidence="1">
    <location>
        <position position="1"/>
    </location>
</feature>
<feature type="chain" id="PRO_0000425060" description="Profilin-6">
    <location>
        <begin position="2"/>
        <end position="131"/>
    </location>
</feature>
<feature type="short sequence motif" description="Involved in PIP2 interaction">
    <location>
        <begin position="81"/>
        <end position="97"/>
    </location>
</feature>
<feature type="modified residue" description="Phosphothreonine" evidence="1">
    <location>
        <position position="111"/>
    </location>
</feature>
<feature type="disulfide bond" evidence="3">
    <location>
        <begin position="13"/>
        <end position="115"/>
    </location>
</feature>
<evidence type="ECO:0000250" key="1"/>
<evidence type="ECO:0000305" key="2"/>
<evidence type="ECO:0000305" key="3">
    <source>
    </source>
</evidence>
<organism>
    <name type="scientific">Phleum pratense</name>
    <name type="common">Common timothy</name>
    <dbReference type="NCBI Taxonomy" id="15957"/>
    <lineage>
        <taxon>Eukaryota</taxon>
        <taxon>Viridiplantae</taxon>
        <taxon>Streptophyta</taxon>
        <taxon>Embryophyta</taxon>
        <taxon>Tracheophyta</taxon>
        <taxon>Spermatophyta</taxon>
        <taxon>Magnoliopsida</taxon>
        <taxon>Liliopsida</taxon>
        <taxon>Poales</taxon>
        <taxon>Poaceae</taxon>
        <taxon>BOP clade</taxon>
        <taxon>Pooideae</taxon>
        <taxon>Poodae</taxon>
        <taxon>Poeae</taxon>
        <taxon>Poeae Chloroplast Group 2 (Poeae type)</taxon>
        <taxon>Poodinae</taxon>
        <taxon>Phleinae</taxon>
        <taxon>Phleum</taxon>
    </lineage>
</organism>
<sequence>MSWQTYVDEHLMCEIEGHHLASAAILGHDGTVWAQSADFPQFKPEEITGIMKDFDEPGHLAPTGMFVAAAKYMVIQGEPGAVIRGKKGAGGITIKKTGQALVVGIYDEPMTPGQCNMVVERLGDYLLKQGL</sequence>
<name>PROF6_PHLPR</name>
<comment type="function">
    <text evidence="1">Binds to actin and affects the structure of the cytoskeleton. At high concentrations, profilin prevents the polymerization of actin, whereas it enhances it at low concentrations (By similarity).</text>
</comment>
<comment type="subunit">
    <text evidence="1">Occurs in many kinds of cells as a complex with monomeric actin in a 1:1 ratio.</text>
</comment>
<comment type="subcellular location">
    <subcellularLocation>
        <location evidence="1">Cytoplasm</location>
        <location evidence="1">Cytoskeleton</location>
    </subcellularLocation>
</comment>
<comment type="PTM">
    <text evidence="1">Phosphorylated by MAP kinases.</text>
</comment>
<comment type="polymorphism">
    <text>Several isoforms of the allergen exist due to polymorphism.</text>
</comment>
<comment type="allergen">
    <text>Causes an allergic reaction in human.</text>
</comment>
<comment type="miscellaneous">
    <text evidence="3">The variability of the residues taking part of IgE-binding epitopes might be responsible of the difference in cross-reactivity among olive pollen cultivars, and between distantly related pollen species, leading to a variable range of allergy reactions among atopic patients.</text>
</comment>
<comment type="similarity">
    <text evidence="2">Belongs to the profilin family.</text>
</comment>
<dbReference type="EMBL" id="DQ663537">
    <property type="protein sequence ID" value="ABG81290.1"/>
    <property type="molecule type" value="mRNA"/>
</dbReference>
<dbReference type="SMR" id="A4KA33"/>
<dbReference type="Allergome" id="553">
    <property type="allergen name" value="Phl p 12"/>
</dbReference>
<dbReference type="GO" id="GO:0005938">
    <property type="term" value="C:cell cortex"/>
    <property type="evidence" value="ECO:0007669"/>
    <property type="project" value="TreeGrafter"/>
</dbReference>
<dbReference type="GO" id="GO:0005856">
    <property type="term" value="C:cytoskeleton"/>
    <property type="evidence" value="ECO:0007669"/>
    <property type="project" value="UniProtKB-SubCell"/>
</dbReference>
<dbReference type="GO" id="GO:0003785">
    <property type="term" value="F:actin monomer binding"/>
    <property type="evidence" value="ECO:0007669"/>
    <property type="project" value="TreeGrafter"/>
</dbReference>
<dbReference type="CDD" id="cd00148">
    <property type="entry name" value="PROF"/>
    <property type="match status" value="1"/>
</dbReference>
<dbReference type="FunFam" id="3.30.450.30:FF:000001">
    <property type="entry name" value="Profilin"/>
    <property type="match status" value="1"/>
</dbReference>
<dbReference type="Gene3D" id="3.30.450.30">
    <property type="entry name" value="Dynein light chain 2a, cytoplasmic"/>
    <property type="match status" value="1"/>
</dbReference>
<dbReference type="InterPro" id="IPR048278">
    <property type="entry name" value="PFN"/>
</dbReference>
<dbReference type="InterPro" id="IPR005455">
    <property type="entry name" value="PFN_euk"/>
</dbReference>
<dbReference type="InterPro" id="IPR036140">
    <property type="entry name" value="PFN_sf"/>
</dbReference>
<dbReference type="InterPro" id="IPR027310">
    <property type="entry name" value="Profilin_CS"/>
</dbReference>
<dbReference type="PANTHER" id="PTHR11604">
    <property type="entry name" value="PROFILIN"/>
    <property type="match status" value="1"/>
</dbReference>
<dbReference type="PANTHER" id="PTHR11604:SF31">
    <property type="entry name" value="PROFILIN"/>
    <property type="match status" value="1"/>
</dbReference>
<dbReference type="Pfam" id="PF00235">
    <property type="entry name" value="Profilin"/>
    <property type="match status" value="1"/>
</dbReference>
<dbReference type="PRINTS" id="PR00392">
    <property type="entry name" value="PROFILIN"/>
</dbReference>
<dbReference type="PRINTS" id="PR01640">
    <property type="entry name" value="PROFILINPLNT"/>
</dbReference>
<dbReference type="SMART" id="SM00392">
    <property type="entry name" value="PROF"/>
    <property type="match status" value="1"/>
</dbReference>
<dbReference type="SUPFAM" id="SSF55770">
    <property type="entry name" value="Profilin (actin-binding protein)"/>
    <property type="match status" value="1"/>
</dbReference>
<dbReference type="PROSITE" id="PS00414">
    <property type="entry name" value="PROFILIN"/>
    <property type="match status" value="1"/>
</dbReference>
<protein>
    <recommendedName>
        <fullName>Profilin-6</fullName>
    </recommendedName>
    <alternativeName>
        <fullName>Pollen allergen Phl p 12</fullName>
    </alternativeName>
    <alternativeName>
        <fullName>pollen profilin variant 3</fullName>
    </alternativeName>
    <allergenName>Phl p 12</allergenName>
</protein>
<keyword id="KW-0009">Actin-binding</keyword>
<keyword id="KW-0020">Allergen</keyword>
<keyword id="KW-0963">Cytoplasm</keyword>
<keyword id="KW-0206">Cytoskeleton</keyword>
<keyword id="KW-1015">Disulfide bond</keyword>
<keyword id="KW-0597">Phosphoprotein</keyword>
<proteinExistence type="evidence at protein level"/>
<accession>A4KA33</accession>